<dbReference type="EMBL" id="AY956393">
    <property type="protein sequence ID" value="AAY28986.1"/>
    <property type="molecule type" value="mRNA"/>
</dbReference>
<dbReference type="RefSeq" id="NP_001035557.1">
    <property type="nucleotide sequence ID" value="NM_001040467.1"/>
</dbReference>
<dbReference type="RefSeq" id="XP_015155720.1">
    <property type="nucleotide sequence ID" value="XM_015300234.4"/>
</dbReference>
<dbReference type="RefSeq" id="XP_015155721.1">
    <property type="nucleotide sequence ID" value="XM_015300235.4"/>
</dbReference>
<dbReference type="RefSeq" id="XP_046790180.1">
    <property type="nucleotide sequence ID" value="XM_046934224.1"/>
</dbReference>
<dbReference type="RefSeq" id="XP_046790181.1">
    <property type="nucleotide sequence ID" value="XM_046934225.1"/>
</dbReference>
<dbReference type="PDB" id="2QTS">
    <property type="method" value="X-ray"/>
    <property type="resolution" value="1.90 A"/>
    <property type="chains" value="A/B/C/D/E/F=26-463"/>
</dbReference>
<dbReference type="PDB" id="3IJ4">
    <property type="method" value="X-ray"/>
    <property type="resolution" value="3.00 A"/>
    <property type="chains" value="A=2-466"/>
</dbReference>
<dbReference type="PDB" id="3S3W">
    <property type="method" value="X-ray"/>
    <property type="resolution" value="2.60 A"/>
    <property type="chains" value="A/B/C=26-463"/>
</dbReference>
<dbReference type="PDB" id="3S3X">
    <property type="method" value="X-ray"/>
    <property type="resolution" value="2.99 A"/>
    <property type="chains" value="A/B/C=26-463"/>
</dbReference>
<dbReference type="PDB" id="4FZ0">
    <property type="method" value="X-ray"/>
    <property type="resolution" value="2.80 A"/>
    <property type="chains" value="A/B/C=14-463"/>
</dbReference>
<dbReference type="PDB" id="4FZ1">
    <property type="method" value="X-ray"/>
    <property type="resolution" value="3.36 A"/>
    <property type="chains" value="A=14-463"/>
</dbReference>
<dbReference type="PDB" id="4NTW">
    <property type="method" value="X-ray"/>
    <property type="resolution" value="2.07 A"/>
    <property type="chains" value="A=14-463"/>
</dbReference>
<dbReference type="PDB" id="4NTX">
    <property type="method" value="X-ray"/>
    <property type="resolution" value="2.27 A"/>
    <property type="chains" value="A=14-463"/>
</dbReference>
<dbReference type="PDB" id="4NTY">
    <property type="method" value="X-ray"/>
    <property type="resolution" value="2.65 A"/>
    <property type="chains" value="A=14-463"/>
</dbReference>
<dbReference type="PDB" id="4NYK">
    <property type="method" value="X-ray"/>
    <property type="resolution" value="3.00 A"/>
    <property type="chains" value="A=2-466"/>
</dbReference>
<dbReference type="PDB" id="5WKU">
    <property type="method" value="X-ray"/>
    <property type="resolution" value="2.95 A"/>
    <property type="chains" value="A/B/C=25-463"/>
</dbReference>
<dbReference type="PDB" id="5WKV">
    <property type="method" value="X-ray"/>
    <property type="resolution" value="3.20 A"/>
    <property type="chains" value="A/B/C=25-463"/>
</dbReference>
<dbReference type="PDB" id="5WKX">
    <property type="method" value="X-ray"/>
    <property type="resolution" value="4.03 A"/>
    <property type="chains" value="A/B/C=25-463"/>
</dbReference>
<dbReference type="PDB" id="5WKY">
    <property type="method" value="X-ray"/>
    <property type="resolution" value="4.00 A"/>
    <property type="chains" value="A/B/C=25-463"/>
</dbReference>
<dbReference type="PDB" id="6AVE">
    <property type="method" value="EM"/>
    <property type="resolution" value="3.70 A"/>
    <property type="chains" value="A/B/C=1-527"/>
</dbReference>
<dbReference type="PDB" id="6CMC">
    <property type="method" value="X-ray"/>
    <property type="resolution" value="3.67 A"/>
    <property type="chains" value="A=14-463"/>
</dbReference>
<dbReference type="PDB" id="6VTK">
    <property type="method" value="EM"/>
    <property type="resolution" value="2.82 A"/>
    <property type="chains" value="A/B/C=1-527"/>
</dbReference>
<dbReference type="PDB" id="6VTL">
    <property type="method" value="EM"/>
    <property type="resolution" value="3.65 A"/>
    <property type="chains" value="A/B/C=1-527"/>
</dbReference>
<dbReference type="PDB" id="6X9H">
    <property type="method" value="X-ray"/>
    <property type="resolution" value="3.01 A"/>
    <property type="chains" value="A/B/C=26-463"/>
</dbReference>
<dbReference type="PDB" id="7LIE">
    <property type="method" value="NMR"/>
    <property type="chains" value="A=291-367"/>
</dbReference>
<dbReference type="PDBsum" id="2QTS"/>
<dbReference type="PDBsum" id="3IJ4"/>
<dbReference type="PDBsum" id="3S3W"/>
<dbReference type="PDBsum" id="3S3X"/>
<dbReference type="PDBsum" id="4FZ0"/>
<dbReference type="PDBsum" id="4FZ1"/>
<dbReference type="PDBsum" id="4NTW"/>
<dbReference type="PDBsum" id="4NTX"/>
<dbReference type="PDBsum" id="4NTY"/>
<dbReference type="PDBsum" id="4NYK"/>
<dbReference type="PDBsum" id="5WKU"/>
<dbReference type="PDBsum" id="5WKV"/>
<dbReference type="PDBsum" id="5WKX"/>
<dbReference type="PDBsum" id="5WKY"/>
<dbReference type="PDBsum" id="6AVE"/>
<dbReference type="PDBsum" id="6CMC"/>
<dbReference type="PDBsum" id="6VTK"/>
<dbReference type="PDBsum" id="6VTL"/>
<dbReference type="PDBsum" id="6X9H"/>
<dbReference type="PDBsum" id="7LIE"/>
<dbReference type="EMDB" id="EMD-21380"/>
<dbReference type="EMDB" id="EMD-21381"/>
<dbReference type="EMDB" id="EMD-21384"/>
<dbReference type="EMDB" id="EMD-21385"/>
<dbReference type="EMDB" id="EMD-6900"/>
<dbReference type="EMDB" id="EMD-7009"/>
<dbReference type="SMR" id="Q1XA76"/>
<dbReference type="DIP" id="DIP-59283N"/>
<dbReference type="FunCoup" id="Q1XA76">
    <property type="interactions" value="385"/>
</dbReference>
<dbReference type="IntAct" id="Q1XA76">
    <property type="interactions" value="1"/>
</dbReference>
<dbReference type="STRING" id="9031.ENSGALP00000073201"/>
<dbReference type="TCDB" id="1.A.6.1.5">
    <property type="family name" value="the epithelial na(+) channel (enac) family"/>
</dbReference>
<dbReference type="GlyCosmos" id="Q1XA76">
    <property type="glycosylation" value="2 sites, No reported glycans"/>
</dbReference>
<dbReference type="GlyGen" id="Q1XA76">
    <property type="glycosylation" value="2 sites"/>
</dbReference>
<dbReference type="iPTMnet" id="Q1XA76"/>
<dbReference type="PaxDb" id="9031-ENSGALP00000010079"/>
<dbReference type="Ensembl" id="ENSGALT00010056659.1">
    <property type="protein sequence ID" value="ENSGALP00010034401.1"/>
    <property type="gene ID" value="ENSGALG00010023231.1"/>
</dbReference>
<dbReference type="GeneID" id="426883"/>
<dbReference type="KEGG" id="gga:426883"/>
<dbReference type="CTD" id="41"/>
<dbReference type="VEuPathDB" id="HostDB:geneid_426883"/>
<dbReference type="eggNOG" id="KOG4294">
    <property type="taxonomic scope" value="Eukaryota"/>
</dbReference>
<dbReference type="GeneTree" id="ENSGT00940000158414"/>
<dbReference type="HOGENOM" id="CLU_020415_1_2_1"/>
<dbReference type="InParanoid" id="Q1XA76"/>
<dbReference type="OMA" id="EVAASHM"/>
<dbReference type="OrthoDB" id="6021021at2759"/>
<dbReference type="PhylomeDB" id="Q1XA76"/>
<dbReference type="Reactome" id="R-GGA-2672351">
    <property type="pathway name" value="Stimuli-sensing channels"/>
</dbReference>
<dbReference type="EvolutionaryTrace" id="Q1XA76"/>
<dbReference type="PRO" id="PR:Q1XA76"/>
<dbReference type="Proteomes" id="UP000000539">
    <property type="component" value="Chromosome 34"/>
</dbReference>
<dbReference type="Bgee" id="ENSGALG00000034025">
    <property type="expression patterns" value="Expressed in cerebellum and 4 other cell types or tissues"/>
</dbReference>
<dbReference type="GO" id="GO:0030425">
    <property type="term" value="C:dendrite"/>
    <property type="evidence" value="ECO:0007669"/>
    <property type="project" value="UniProtKB-SubCell"/>
</dbReference>
<dbReference type="GO" id="GO:0005886">
    <property type="term" value="C:plasma membrane"/>
    <property type="evidence" value="ECO:0000315"/>
    <property type="project" value="UniProtKB"/>
</dbReference>
<dbReference type="GO" id="GO:0045211">
    <property type="term" value="C:postsynaptic membrane"/>
    <property type="evidence" value="ECO:0007669"/>
    <property type="project" value="UniProtKB-SubCell"/>
</dbReference>
<dbReference type="GO" id="GO:0042802">
    <property type="term" value="F:identical protein binding"/>
    <property type="evidence" value="ECO:0000353"/>
    <property type="project" value="IntAct"/>
</dbReference>
<dbReference type="GO" id="GO:0015280">
    <property type="term" value="F:ligand-gated sodium channel activity"/>
    <property type="evidence" value="ECO:0000318"/>
    <property type="project" value="GO_Central"/>
</dbReference>
<dbReference type="GO" id="GO:0160128">
    <property type="term" value="F:pH-gated monoatomic ion channel activity"/>
    <property type="evidence" value="ECO:0000314"/>
    <property type="project" value="UniProtKB"/>
</dbReference>
<dbReference type="GO" id="GO:0071467">
    <property type="term" value="P:cellular response to pH"/>
    <property type="evidence" value="ECO:0000314"/>
    <property type="project" value="UniProtKB"/>
</dbReference>
<dbReference type="GO" id="GO:0035725">
    <property type="term" value="P:sodium ion transmembrane transport"/>
    <property type="evidence" value="ECO:0000314"/>
    <property type="project" value="UniProtKB"/>
</dbReference>
<dbReference type="FunFam" id="2.60.470.10:FF:000001">
    <property type="entry name" value="Acid-sensing (proton-gated) ion channel family member 4a"/>
    <property type="match status" value="1"/>
</dbReference>
<dbReference type="FunFam" id="1.10.287.820:FF:000001">
    <property type="entry name" value="acid-sensing ion channel 1 isoform X2"/>
    <property type="match status" value="1"/>
</dbReference>
<dbReference type="FunFam" id="1.10.3590.10:FF:000001">
    <property type="entry name" value="acid-sensing ion channel 1 isoform X2"/>
    <property type="match status" value="1"/>
</dbReference>
<dbReference type="FunFam" id="1.10.3590.10:FF:000002">
    <property type="entry name" value="acid-sensing ion channel 1 isoform X2"/>
    <property type="match status" value="1"/>
</dbReference>
<dbReference type="FunFam" id="1.10.287.770:FF:000001">
    <property type="entry name" value="Acid-sensing ion channel subunit 1"/>
    <property type="match status" value="1"/>
</dbReference>
<dbReference type="Gene3D" id="1.10.3590.10">
    <property type="entry name" value="acid-sensing ion channel 1 domain"/>
    <property type="match status" value="2"/>
</dbReference>
<dbReference type="Gene3D" id="1.10.287.820">
    <property type="entry name" value="Acid-sensing ion channel domain"/>
    <property type="match status" value="1"/>
</dbReference>
<dbReference type="Gene3D" id="1.10.287.770">
    <property type="entry name" value="YojJ-like"/>
    <property type="match status" value="2"/>
</dbReference>
<dbReference type="InterPro" id="IPR001873">
    <property type="entry name" value="ENaC"/>
</dbReference>
<dbReference type="InterPro" id="IPR004724">
    <property type="entry name" value="ENaC_chordates"/>
</dbReference>
<dbReference type="InterPro" id="IPR020903">
    <property type="entry name" value="ENaC_CS"/>
</dbReference>
<dbReference type="NCBIfam" id="TIGR00859">
    <property type="entry name" value="ENaC"/>
    <property type="match status" value="1"/>
</dbReference>
<dbReference type="PANTHER" id="PTHR11690:SF170">
    <property type="entry name" value="ACID-SENSING ION CHANNEL 1"/>
    <property type="match status" value="1"/>
</dbReference>
<dbReference type="PANTHER" id="PTHR11690">
    <property type="entry name" value="AMILORIDE-SENSITIVE SODIUM CHANNEL-RELATED"/>
    <property type="match status" value="1"/>
</dbReference>
<dbReference type="Pfam" id="PF00858">
    <property type="entry name" value="ASC"/>
    <property type="match status" value="1"/>
</dbReference>
<dbReference type="PRINTS" id="PR01078">
    <property type="entry name" value="AMINACHANNEL"/>
</dbReference>
<dbReference type="PROSITE" id="PS01206">
    <property type="entry name" value="ASC"/>
    <property type="match status" value="1"/>
</dbReference>
<reference key="1">
    <citation type="journal article" date="2005" name="J. Physiol. (Lond.)">
        <title>Proton sensitivity of ASIC1 appeared with the rise of fishes by changes of residues in the region that follows TM1 in the ectodomain of the channel.</title>
        <authorList>
            <person name="Coric T."/>
            <person name="Zheng D."/>
            <person name="Gerstein M."/>
            <person name="Canessa C.M."/>
        </authorList>
    </citation>
    <scope>NUCLEOTIDE SEQUENCE [MRNA]</scope>
    <scope>FUNCTION</scope>
</reference>
<reference evidence="14" key="2">
    <citation type="journal article" date="2007" name="Nature">
        <title>Structure of acid-sensing ion channel 1 at 1.9 A resolution and low pH.</title>
        <authorList>
            <person name="Jasti J."/>
            <person name="Furukawa H."/>
            <person name="Gonzales E.B."/>
            <person name="Gouaux E."/>
        </authorList>
    </citation>
    <scope>X-RAY CRYSTALLOGRAPHY (1.9 ANGSTROMS) OF 26-463</scope>
    <scope>SUBUNIT</scope>
    <scope>DISULFIDE BONDS</scope>
    <scope>GLYCOSYLATION AT ASN-367 AND ASN-394</scope>
    <scope>FUNCTION</scope>
    <scope>SUBCELLULAR LOCATION</scope>
    <scope>TOPOLOGY</scope>
    <scope>MUTAGENESIS OF 1-MET--SER-25; ASP-346; ASP-350 AND 464-LEU--CYS-527</scope>
</reference>
<reference evidence="15 23" key="3">
    <citation type="journal article" date="2009" name="Nature">
        <title>Pore architecture and ion sites in acid-sensing ion channels and P2X receptors.</title>
        <authorList>
            <person name="Gonzales E.B."/>
            <person name="Kawate T."/>
            <person name="Gouaux E."/>
        </authorList>
    </citation>
    <scope>X-RAY CRYSTALLOGRAPHY (3.0 ANGSTROMS) OF 2-466</scope>
    <scope>DISULFIDE BONDS</scope>
    <scope>FUNCTION</scope>
    <scope>TOPOLOGY</scope>
    <scope>SUBCELLULAR LOCATION</scope>
    <scope>SUBUNIT</scope>
</reference>
<reference evidence="16 17" key="4">
    <citation type="journal article" date="2012" name="Nat. Commun.">
        <title>Structure of the acid-sensing ion channel 1 in complex with the gating modifier Psalmotoxin 1.</title>
        <authorList>
            <person name="Dawson R.J."/>
            <person name="Benz J."/>
            <person name="Stohler P."/>
            <person name="Tetaz T."/>
            <person name="Joseph C."/>
            <person name="Huber S."/>
            <person name="Schmid G."/>
            <person name="Hugin D."/>
            <person name="Pflimlin P."/>
            <person name="Trube G."/>
            <person name="Rudolph M.G."/>
            <person name="Hennig M."/>
            <person name="Ruf A."/>
        </authorList>
    </citation>
    <scope>X-RAY CRYSTALLOGRAPHY (2.60 ANGSTROMS) OF 26-463 IN COMPLEX WITH SPIDER VENOM PSALMOTOXIN-1</scope>
    <scope>ACTIVITY REGULATION BY SPIDER VENOM PSALMOTOXIN</scope>
    <scope>DISULFIDE BONDS</scope>
    <scope>GLYCOSYLATION AT ASN-367 AND ASN-394</scope>
    <scope>MUTAGENESIS OF 1-MET--SER-25 AND 464-LEU--CYS-527</scope>
</reference>
<reference evidence="18 19" key="5">
    <citation type="journal article" date="2012" name="Nature">
        <title>Structural plasticity and dynamic selectivity of acid-sensing ion channel-spider toxin complexes.</title>
        <authorList>
            <person name="Baconguis I."/>
            <person name="Gouaux E."/>
        </authorList>
    </citation>
    <scope>X-RAY CRYSTALLOGRAPHY (2.80 ANGSTROMS) OF 14-463</scope>
    <scope>GLYCOSYLATION AT ASN-367 AND ASN-394</scope>
    <scope>FUNCTION</scope>
    <scope>ACTIVITY REGULATION</scope>
    <scope>SUBUNIT</scope>
    <scope>MUTAGENESIS OF 1-MET--SER-13; GLU-80 AND 464-LEU--CYS-527</scope>
    <scope>DISULFIDE BOND</scope>
    <scope>MOTIF</scope>
    <scope>SITE</scope>
</reference>
<reference evidence="20 21 22" key="6">
    <citation type="journal article" date="2014" name="Cell">
        <title>X-ray structure of acid-sensing ion channel 1-snake toxin complex reveals open state of a Na(+)-selective channel.</title>
        <authorList>
            <person name="Baconguis I."/>
            <person name="Bohlen C.J."/>
            <person name="Goehring A."/>
            <person name="Julius D."/>
            <person name="Gouaux E."/>
        </authorList>
    </citation>
    <scope>X-RAY CRYSTALLOGRAPHY (2.07 ANGSTROMS) OF 14-463 IN COMPLEXES WITH SODIUM IONS; AMILORIDE AND THE HETERODIMERIC SNAKE VENOM NEUROTOXIN COMPOSED OF MITTX-ALPHA AND MITTX-BETA</scope>
    <scope>FUNCTION</scope>
    <scope>TRANSPORTER ACTIVITY</scope>
    <scope>SUBCELLULAR LOCATION</scope>
    <scope>SUBUNIT</scope>
    <scope>ACTIVITY REGULATION</scope>
    <scope>TOPOLOGY</scope>
    <scope>DOMAIN</scope>
    <scope>DISULFIDE BOND</scope>
    <scope>MOTIF</scope>
</reference>
<keyword id="KW-0002">3D-structure</keyword>
<keyword id="KW-1003">Cell membrane</keyword>
<keyword id="KW-0966">Cell projection</keyword>
<keyword id="KW-1015">Disulfide bond</keyword>
<keyword id="KW-0325">Glycoprotein</keyword>
<keyword id="KW-0407">Ion channel</keyword>
<keyword id="KW-0406">Ion transport</keyword>
<keyword id="KW-0472">Membrane</keyword>
<keyword id="KW-0628">Postsynaptic cell membrane</keyword>
<keyword id="KW-1185">Reference proteome</keyword>
<keyword id="KW-0915">Sodium</keyword>
<keyword id="KW-0894">Sodium channel</keyword>
<keyword id="KW-0739">Sodium transport</keyword>
<keyword id="KW-0770">Synapse</keyword>
<keyword id="KW-0812">Transmembrane</keyword>
<keyword id="KW-1133">Transmembrane helix</keyword>
<keyword id="KW-0813">Transport</keyword>
<name>ASIC1_CHICK</name>
<feature type="chain" id="PRO_0000308417" description="Acid-sensing ion channel 1">
    <location>
        <begin position="1"/>
        <end position="527"/>
    </location>
</feature>
<feature type="topological domain" description="Cytoplasmic" evidence="13 20">
    <location>
        <begin position="1"/>
        <end position="49"/>
    </location>
</feature>
<feature type="transmembrane region" description="Helical" evidence="13 20">
    <location>
        <begin position="50"/>
        <end position="71"/>
    </location>
</feature>
<feature type="topological domain" description="Extracellular" evidence="13 20">
    <location>
        <begin position="72"/>
        <end position="424"/>
    </location>
</feature>
<feature type="transmembrane region" description="Discontinuously helical" evidence="13 20">
    <location>
        <begin position="425"/>
        <end position="454"/>
    </location>
</feature>
<feature type="topological domain" description="Cytoplasmic" evidence="13 20">
    <location>
        <begin position="455"/>
        <end position="527"/>
    </location>
</feature>
<feature type="short sequence motif" description="GAS motif; ion selectivity filter" evidence="12 13">
    <location>
        <begin position="443"/>
        <end position="445"/>
    </location>
</feature>
<feature type="site" description="Involved in channel desensitization; the process by which the channel becomes unresponsive to proton stimulation" evidence="7">
    <location>
        <position position="80"/>
    </location>
</feature>
<feature type="site" description="Involved in proton-dependent gating" evidence="1">
    <location>
        <position position="356"/>
    </location>
</feature>
<feature type="glycosylation site" description="N-linked (GlcNAc...) asparagine" evidence="4 6 7 14">
    <location>
        <position position="367"/>
    </location>
</feature>
<feature type="glycosylation site" description="N-linked (GlcNAc...) asparagine" evidence="4 6 7 14">
    <location>
        <position position="394"/>
    </location>
</feature>
<feature type="disulfide bond" evidence="4 5 6 7 8 14 15 16 17 18 19 20 21 22 23">
    <location>
        <begin position="94"/>
        <end position="195"/>
    </location>
</feature>
<feature type="disulfide bond" evidence="4 5 6 7 8 14 15 16 17 18 19 20 21 22 23">
    <location>
        <begin position="173"/>
        <end position="180"/>
    </location>
</feature>
<feature type="disulfide bond" evidence="4 5 6 7 8 14 15 16 17 18 19 20 21 22 23">
    <location>
        <begin position="291"/>
        <end position="366"/>
    </location>
</feature>
<feature type="disulfide bond" evidence="4 5 6 7 8 14 15 16 17 18 19 20 21 22 23">
    <location>
        <begin position="309"/>
        <end position="362"/>
    </location>
</feature>
<feature type="disulfide bond" evidence="4 5 6 7 8 14 15 16 17 18 19 20 21 22 23">
    <location>
        <begin position="313"/>
        <end position="360"/>
    </location>
</feature>
<feature type="disulfide bond" evidence="4 5 6 7 8 14 15 16 17 18 19 20 21 22 23">
    <location>
        <begin position="322"/>
        <end position="344"/>
    </location>
</feature>
<feature type="disulfide bond" evidence="4 5 6 7 8 14 15 16 17 18 19 20 21 22 23">
    <location>
        <begin position="324"/>
        <end position="336"/>
    </location>
</feature>
<feature type="mutagenesis site" description="Impairs channel activity; when associated with missing 464-L--C-527." evidence="4 6">
    <location>
        <begin position="1"/>
        <end position="25"/>
    </location>
</feature>
<feature type="mutagenesis site" description="No effect on channel activity; when associated with missing 464-L--C-527." evidence="7">
    <location>
        <begin position="1"/>
        <end position="13"/>
    </location>
</feature>
<feature type="mutagenesis site" description="Strongly increases speed of desensitization." evidence="7">
    <original>E</original>
    <variation>A</variation>
    <location>
        <position position="80"/>
    </location>
</feature>
<feature type="mutagenesis site" description="Loss of pH-gated channel activity." evidence="4">
    <original>D</original>
    <variation>N</variation>
    <location>
        <position position="346"/>
    </location>
</feature>
<feature type="mutagenesis site" description="Loss of pH-gated channel activity." evidence="4">
    <original>D</original>
    <variation>N</variation>
    <location>
        <position position="350"/>
    </location>
</feature>
<feature type="mutagenesis site" description="No effect on channel activity; when associated with missing 1-M--S-13. Impairs channel activity; when associated with missing 1-M--S-25." evidence="4 6 7">
    <location>
        <begin position="464"/>
        <end position="527"/>
    </location>
</feature>
<feature type="helix" evidence="27">
    <location>
        <begin position="19"/>
        <end position="25"/>
    </location>
</feature>
<feature type="helix" evidence="27">
    <location>
        <begin position="31"/>
        <end position="34"/>
    </location>
</feature>
<feature type="helix" evidence="24">
    <location>
        <begin position="45"/>
        <end position="69"/>
    </location>
</feature>
<feature type="strand" evidence="24">
    <location>
        <begin position="74"/>
        <end position="81"/>
    </location>
</feature>
<feature type="strand" evidence="24">
    <location>
        <begin position="84"/>
        <end position="87"/>
    </location>
</feature>
<feature type="strand" evidence="24">
    <location>
        <begin position="90"/>
        <end position="96"/>
    </location>
</feature>
<feature type="strand" evidence="27">
    <location>
        <begin position="98"/>
        <end position="100"/>
    </location>
</feature>
<feature type="helix" evidence="24">
    <location>
        <begin position="101"/>
        <end position="103"/>
    </location>
</feature>
<feature type="helix" evidence="24">
    <location>
        <begin position="106"/>
        <end position="112"/>
    </location>
</feature>
<feature type="turn" evidence="24">
    <location>
        <begin position="113"/>
        <end position="117"/>
    </location>
</feature>
<feature type="strand" evidence="25">
    <location>
        <begin position="121"/>
        <end position="124"/>
    </location>
</feature>
<feature type="helix" evidence="24">
    <location>
        <begin position="134"/>
        <end position="142"/>
    </location>
</feature>
<feature type="helix" evidence="24">
    <location>
        <begin position="155"/>
        <end position="162"/>
    </location>
</feature>
<feature type="helix" evidence="24">
    <location>
        <begin position="166"/>
        <end position="169"/>
    </location>
</feature>
<feature type="strand" evidence="24">
    <location>
        <begin position="170"/>
        <end position="175"/>
    </location>
</feature>
<feature type="helix" evidence="24">
    <location>
        <begin position="182"/>
        <end position="184"/>
    </location>
</feature>
<feature type="strand" evidence="24">
    <location>
        <begin position="185"/>
        <end position="190"/>
    </location>
</feature>
<feature type="strand" evidence="24">
    <location>
        <begin position="193"/>
        <end position="198"/>
    </location>
</feature>
<feature type="strand" evidence="24">
    <location>
        <begin position="203"/>
        <end position="206"/>
    </location>
</feature>
<feature type="strand" evidence="28">
    <location>
        <begin position="209"/>
        <end position="211"/>
    </location>
</feature>
<feature type="strand" evidence="24">
    <location>
        <begin position="212"/>
        <end position="214"/>
    </location>
</feature>
<feature type="helix" evidence="24">
    <location>
        <begin position="215"/>
        <end position="217"/>
    </location>
</feature>
<feature type="strand" evidence="24">
    <location>
        <begin position="218"/>
        <end position="224"/>
    </location>
</feature>
<feature type="helix" evidence="24">
    <location>
        <begin position="227"/>
        <end position="229"/>
    </location>
</feature>
<feature type="strand" evidence="24">
    <location>
        <begin position="244"/>
        <end position="251"/>
    </location>
</feature>
<feature type="helix" evidence="24">
    <location>
        <begin position="259"/>
        <end position="262"/>
    </location>
</feature>
<feature type="strand" evidence="24">
    <location>
        <begin position="264"/>
        <end position="266"/>
    </location>
</feature>
<feature type="strand" evidence="24">
    <location>
        <begin position="270"/>
        <end position="282"/>
    </location>
</feature>
<feature type="turn" evidence="24">
    <location>
        <begin position="286"/>
        <end position="288"/>
    </location>
</feature>
<feature type="strand" evidence="26">
    <location>
        <begin position="301"/>
        <end position="303"/>
    </location>
</feature>
<feature type="helix" evidence="24">
    <location>
        <begin position="306"/>
        <end position="322"/>
    </location>
</feature>
<feature type="strand" evidence="24">
    <location>
        <begin position="323"/>
        <end position="325"/>
    </location>
</feature>
<feature type="strand" evidence="29">
    <location>
        <begin position="327"/>
        <end position="329"/>
    </location>
</feature>
<feature type="strand" evidence="24">
    <location>
        <begin position="331"/>
        <end position="333"/>
    </location>
</feature>
<feature type="helix" evidence="24">
    <location>
        <begin position="338"/>
        <end position="343"/>
    </location>
</feature>
<feature type="helix" evidence="24">
    <location>
        <begin position="345"/>
        <end position="354"/>
    </location>
</feature>
<feature type="strand" evidence="24">
    <location>
        <begin position="357"/>
        <end position="360"/>
    </location>
</feature>
<feature type="strand" evidence="24">
    <location>
        <begin position="365"/>
        <end position="381"/>
    </location>
</feature>
<feature type="turn" evidence="24">
    <location>
        <begin position="383"/>
        <end position="385"/>
    </location>
</feature>
<feature type="helix" evidence="24">
    <location>
        <begin position="386"/>
        <end position="393"/>
    </location>
</feature>
<feature type="helix" evidence="24">
    <location>
        <begin position="397"/>
        <end position="403"/>
    </location>
</feature>
<feature type="strand" evidence="24">
    <location>
        <begin position="404"/>
        <end position="425"/>
    </location>
</feature>
<feature type="helix" evidence="24">
    <location>
        <begin position="427"/>
        <end position="457"/>
    </location>
</feature>
<gene>
    <name evidence="9" type="primary">ASIC1</name>
    <name type="synonym">ACCN2</name>
</gene>
<accession>Q1XA76</accession>
<organism>
    <name type="scientific">Gallus gallus</name>
    <name type="common">Chicken</name>
    <dbReference type="NCBI Taxonomy" id="9031"/>
    <lineage>
        <taxon>Eukaryota</taxon>
        <taxon>Metazoa</taxon>
        <taxon>Chordata</taxon>
        <taxon>Craniata</taxon>
        <taxon>Vertebrata</taxon>
        <taxon>Euteleostomi</taxon>
        <taxon>Archelosauria</taxon>
        <taxon>Archosauria</taxon>
        <taxon>Dinosauria</taxon>
        <taxon>Saurischia</taxon>
        <taxon>Theropoda</taxon>
        <taxon>Coelurosauria</taxon>
        <taxon>Aves</taxon>
        <taxon>Neognathae</taxon>
        <taxon>Galloanserae</taxon>
        <taxon>Galliformes</taxon>
        <taxon>Phasianidae</taxon>
        <taxon>Phasianinae</taxon>
        <taxon>Gallus</taxon>
    </lineage>
</organism>
<evidence type="ECO:0000250" key="1">
    <source>
        <dbReference type="UniProtKB" id="P78348"/>
    </source>
</evidence>
<evidence type="ECO:0000250" key="2">
    <source>
        <dbReference type="UniProtKB" id="Q6NXK8"/>
    </source>
</evidence>
<evidence type="ECO:0000269" key="3">
    <source>
    </source>
</evidence>
<evidence type="ECO:0000269" key="4">
    <source>
    </source>
</evidence>
<evidence type="ECO:0000269" key="5">
    <source>
    </source>
</evidence>
<evidence type="ECO:0000269" key="6">
    <source>
    </source>
</evidence>
<evidence type="ECO:0000269" key="7">
    <source>
    </source>
</evidence>
<evidence type="ECO:0000269" key="8">
    <source>
    </source>
</evidence>
<evidence type="ECO:0000303" key="9">
    <source>
    </source>
</evidence>
<evidence type="ECO:0000305" key="10"/>
<evidence type="ECO:0000305" key="11">
    <source>
    </source>
</evidence>
<evidence type="ECO:0000305" key="12">
    <source>
    </source>
</evidence>
<evidence type="ECO:0000305" key="13">
    <source>
    </source>
</evidence>
<evidence type="ECO:0007744" key="14">
    <source>
        <dbReference type="PDB" id="2QTS"/>
    </source>
</evidence>
<evidence type="ECO:0007744" key="15">
    <source>
        <dbReference type="PDB" id="3IJ4"/>
    </source>
</evidence>
<evidence type="ECO:0007744" key="16">
    <source>
        <dbReference type="PDB" id="3S3W"/>
    </source>
</evidence>
<evidence type="ECO:0007744" key="17">
    <source>
        <dbReference type="PDB" id="3S3X"/>
    </source>
</evidence>
<evidence type="ECO:0007744" key="18">
    <source>
        <dbReference type="PDB" id="4FZ0"/>
    </source>
</evidence>
<evidence type="ECO:0007744" key="19">
    <source>
        <dbReference type="PDB" id="4FZ1"/>
    </source>
</evidence>
<evidence type="ECO:0007744" key="20">
    <source>
        <dbReference type="PDB" id="4NTW"/>
    </source>
</evidence>
<evidence type="ECO:0007744" key="21">
    <source>
        <dbReference type="PDB" id="4NTX"/>
    </source>
</evidence>
<evidence type="ECO:0007744" key="22">
    <source>
        <dbReference type="PDB" id="4NTY"/>
    </source>
</evidence>
<evidence type="ECO:0007744" key="23">
    <source>
        <dbReference type="PDB" id="4NYK"/>
    </source>
</evidence>
<evidence type="ECO:0007829" key="24">
    <source>
        <dbReference type="PDB" id="2QTS"/>
    </source>
</evidence>
<evidence type="ECO:0007829" key="25">
    <source>
        <dbReference type="PDB" id="3IJ4"/>
    </source>
</evidence>
<evidence type="ECO:0007829" key="26">
    <source>
        <dbReference type="PDB" id="4NTW"/>
    </source>
</evidence>
<evidence type="ECO:0007829" key="27">
    <source>
        <dbReference type="PDB" id="6VTK"/>
    </source>
</evidence>
<evidence type="ECO:0007829" key="28">
    <source>
        <dbReference type="PDB" id="6X9H"/>
    </source>
</evidence>
<evidence type="ECO:0007829" key="29">
    <source>
        <dbReference type="PDB" id="7LIE"/>
    </source>
</evidence>
<comment type="function">
    <text evidence="2 3 4 5 7 8">Forms voltage-independent, pH-gated trimeric sodium channels that act as postsynaptic excitatory receptors in the nervous system, playing a crucial role in regulating synaptic plasticity, learning, and memory (PubMed:16002453, PubMed:17882215, PubMed:19641589, PubMed:24507937). Upon extracellular pH drop this channel elicits transient, fast activating, and completely desensitizing inward currents (PubMed:22842900, PubMed:24507937). Displays high selectivity for sodium ions but can also permit the permeation of other cations (PubMed:24507937). Regulates more or less directly intracellular calcium concentration and CaMKII phosphorylation, and thereby the density of dendritic spines. Modulates neuronal activity in the circuits underlying innate fear (By similarity).</text>
</comment>
<comment type="catalytic activity">
    <reaction evidence="8">
        <text>Na(+)(in) = Na(+)(out)</text>
        <dbReference type="Rhea" id="RHEA:34963"/>
        <dbReference type="ChEBI" id="CHEBI:29101"/>
    </reaction>
</comment>
<comment type="catalytic activity">
    <reaction evidence="8">
        <text>Li(+)(in) = Li(+)(out)</text>
        <dbReference type="Rhea" id="RHEA:78551"/>
        <dbReference type="ChEBI" id="CHEBI:49713"/>
    </reaction>
</comment>
<comment type="catalytic activity">
    <reaction evidence="8">
        <text>K(+)(in) = K(+)(out)</text>
        <dbReference type="Rhea" id="RHEA:29463"/>
        <dbReference type="ChEBI" id="CHEBI:29103"/>
    </reaction>
</comment>
<comment type="catalytic activity">
    <reaction evidence="1">
        <text>Ca(2+)(in) = Ca(2+)(out)</text>
        <dbReference type="Rhea" id="RHEA:29671"/>
        <dbReference type="ChEBI" id="CHEBI:29108"/>
    </reaction>
</comment>
<comment type="activity regulation">
    <text evidence="6 7 8">Inhibited by the diuretic drug amiloride (PubMed:22842900, PubMed:24507937). Inhibited by Cs(1+) ions (PubMed:22842900). Inhibited by the spider venom psalmotoxin-1; this locks the channel into its desensitized conformation (PubMed:22760635, PubMed:22842900). Channel activity is increased by the heterodimeric snake venom neurotoxin composed of MitTx-alpha and MitTx-beta; this slows channel closure and increases the magnitude of the steady-state current that is triggered by low pH (PubMed:24507937).</text>
</comment>
<comment type="subunit">
    <text evidence="1 4 5 7">Homotrimer (PubMed:17882215, PubMed:19641589, PubMed:22842900). Heterotrimer; with other ASIC proteins producing channel with different properties (By similarity).</text>
</comment>
<comment type="interaction">
    <interactant intactId="EBI-15659618">
        <id>Q1XA76</id>
    </interactant>
    <interactant intactId="EBI-15659618">
        <id>Q1XA76</id>
        <label>ASIC1</label>
    </interactant>
    <organismsDiffer>false</organismsDiffer>
    <experiments>10</experiments>
</comment>
<comment type="interaction">
    <interactant intactId="EBI-15659618">
        <id>Q1XA76</id>
    </interactant>
    <interactant intactId="EBI-16002043">
        <id>P60514</id>
    </interactant>
    <organismsDiffer>true</organismsDiffer>
    <experiments>2</experiments>
</comment>
<comment type="subcellular location">
    <subcellularLocation>
        <location evidence="4 5 8">Cell membrane</location>
        <topology evidence="4 5 8">Multi-pass membrane protein</topology>
    </subcellularLocation>
    <subcellularLocation>
        <location evidence="2">Postsynaptic cell membrane</location>
    </subcellularLocation>
    <subcellularLocation>
        <location evidence="2">Cell projection</location>
        <location evidence="2">Dendrite</location>
    </subcellularLocation>
</comment>
<comment type="domain">
    <text evidence="8">The second transmembrane domain (TM2) is a discontinuous alpha-helix disrupted by the GAS motif, which forms the selectivity filter by adopting an extended, belt-like conformation aligned approximately parallel to the membrane plane. This peptide belt encircles the waist of the channel and divides TM2 into two discontinuous helical segments. The distal helical segment of TM2 interacts with the cytoplasmic portion of the first transmembrane domain (TM1) from a neighboring subunit, contributing to the structural and functional integrity of the channel.</text>
</comment>
<comment type="similarity">
    <text evidence="10">Belongs to the amiloride-sensitive sodium channel (TC 1.A.6) family. ASIC1 subfamily.</text>
</comment>
<sequence length="527" mass="60010">MMDLKVDEEEVDSGQPVSIQAFASSSTLHGISHIFSYERLSLKRVVWALCFMGSLALLALVCTNRIQYYFLYPHVTKLDEVAATRLTFPAVTFCNLNEFRFSRVTKNDLYHAGELLALLNNRYEIPDTQTADEKQLEILQDKANFRNFKPKPFNMLEFYDRAGHDIREMLLSCFFRGEQCSPEDFKVVFTRYGKCYTFNAGQDGKPRLITMKGGTGNGLEIMLDIQQDEYLPVWGETDETSFEAGIKVQIHSQDEPPLIDQLGFGVAPGFQTFVSCQEQRLIYLPPPWGDCKATTGDSEFYDTYSITACRIDCETRYLVENCNCRMVHMPGDAPYCTPEQYKECADPALDFLVEKDNEYCVCEMPCNVTRYGKELSMVKIPSKASAKYLAKKYNKSEQYIGENILVLDIFFEALNYETIEQKKAYEVAGLLGDIGGQMGLFIGASILTVLELFDYAYEVIKHRLCRRGKCRKNHKRNNTDKGVALSMDDVKRHNPCESLRGHPAGMTYAANILPHHPARGTFEDFTC</sequence>
<protein>
    <recommendedName>
        <fullName evidence="11">Acid-sensing ion channel 1</fullName>
        <shortName evidence="9">ASIC1</shortName>
    </recommendedName>
    <alternativeName>
        <fullName>Amiloride-sensitive cation channel 2, neuronal</fullName>
    </alternativeName>
</protein>
<proteinExistence type="evidence at protein level"/>